<proteinExistence type="inferred from homology"/>
<comment type="function">
    <text>Member of the two-component regulatory system CiaH/CiaR. Involved in early steps of competence regulation and in penicillin susceptibility. Probably phosphorylates CiaR.</text>
</comment>
<comment type="catalytic activity">
    <reaction>
        <text>ATP + protein L-histidine = ADP + protein N-phospho-L-histidine.</text>
        <dbReference type="EC" id="2.7.13.3"/>
    </reaction>
</comment>
<comment type="subcellular location">
    <subcellularLocation>
        <location>Cell membrane</location>
        <topology>Multi-pass membrane protein</topology>
    </subcellularLocation>
</comment>
<feature type="chain" id="PRO_0000074723" description="Sensor protein CiaH">
    <location>
        <begin position="1"/>
        <end position="444"/>
    </location>
</feature>
<feature type="transmembrane region" description="Helical" evidence="1">
    <location>
        <begin position="21"/>
        <end position="41"/>
    </location>
</feature>
<feature type="transmembrane region" description="Helical" evidence="1">
    <location>
        <begin position="183"/>
        <end position="203"/>
    </location>
</feature>
<feature type="domain" description="Histidine kinase" evidence="2">
    <location>
        <begin position="223"/>
        <end position="438"/>
    </location>
</feature>
<feature type="modified residue" description="Phosphohistidine; by autocatalysis" evidence="2">
    <location>
        <position position="226"/>
    </location>
</feature>
<reference key="1">
    <citation type="journal article" date="1994" name="Mol. Microbiol.">
        <title>A two-component signal-transducing system is involved in competence and penicillin susceptibility in laboratory mutants of Streptococcus pneumoniae.</title>
        <authorList>
            <person name="Guenzi E."/>
            <person name="Gasc A.M."/>
            <person name="Sicard M.A."/>
            <person name="Hakenbeck R."/>
        </authorList>
    </citation>
    <scope>NUCLEOTIDE SEQUENCE [GENOMIC DNA]</scope>
</reference>
<reference key="2">
    <citation type="journal article" date="2001" name="J. Bacteriol.">
        <title>Genome of the bacterium Streptococcus pneumoniae strain R6.</title>
        <authorList>
            <person name="Hoskins J."/>
            <person name="Alborn W.E. Jr."/>
            <person name="Arnold J."/>
            <person name="Blaszczak L.C."/>
            <person name="Burgett S."/>
            <person name="DeHoff B.S."/>
            <person name="Estrem S.T."/>
            <person name="Fritz L."/>
            <person name="Fu D.-J."/>
            <person name="Fuller W."/>
            <person name="Geringer C."/>
            <person name="Gilmour R."/>
            <person name="Glass J.S."/>
            <person name="Khoja H."/>
            <person name="Kraft A.R."/>
            <person name="Lagace R.E."/>
            <person name="LeBlanc D.J."/>
            <person name="Lee L.N."/>
            <person name="Lefkowitz E.J."/>
            <person name="Lu J."/>
            <person name="Matsushima P."/>
            <person name="McAhren S.M."/>
            <person name="McHenney M."/>
            <person name="McLeaster K."/>
            <person name="Mundy C.W."/>
            <person name="Nicas T.I."/>
            <person name="Norris F.H."/>
            <person name="O'Gara M."/>
            <person name="Peery R.B."/>
            <person name="Robertson G.T."/>
            <person name="Rockey P."/>
            <person name="Sun P.-M."/>
            <person name="Winkler M.E."/>
            <person name="Yang Y."/>
            <person name="Young-Bellido M."/>
            <person name="Zhao G."/>
            <person name="Zook C.A."/>
            <person name="Baltz R.H."/>
            <person name="Jaskunas S.R."/>
            <person name="Rosteck P.R. Jr."/>
            <person name="Skatrud P.L."/>
            <person name="Glass J.I."/>
        </authorList>
    </citation>
    <scope>NUCLEOTIDE SEQUENCE [LARGE SCALE GENOMIC DNA]</scope>
    <source>
        <strain>ATCC BAA-255 / R6</strain>
    </source>
</reference>
<dbReference type="EC" id="2.7.13.3"/>
<dbReference type="EMBL" id="X77249">
    <property type="protein sequence ID" value="CAA54466.1"/>
    <property type="molecule type" value="Genomic_DNA"/>
</dbReference>
<dbReference type="EMBL" id="AE007317">
    <property type="protein sequence ID" value="AAK99512.1"/>
    <property type="molecule type" value="Genomic_DNA"/>
</dbReference>
<dbReference type="PIR" id="D97960">
    <property type="entry name" value="D97960"/>
</dbReference>
<dbReference type="PIR" id="S49545">
    <property type="entry name" value="S49545"/>
</dbReference>
<dbReference type="RefSeq" id="NP_358302.1">
    <property type="nucleotide sequence ID" value="NC_003098.1"/>
</dbReference>
<dbReference type="RefSeq" id="WP_000491790.1">
    <property type="nucleotide sequence ID" value="NC_003098.1"/>
</dbReference>
<dbReference type="SMR" id="P0A4I6"/>
<dbReference type="STRING" id="171101.spr0708"/>
<dbReference type="GeneID" id="45653830"/>
<dbReference type="KEGG" id="spr:spr0708"/>
<dbReference type="PATRIC" id="fig|171101.6.peg.784"/>
<dbReference type="eggNOG" id="COG5002">
    <property type="taxonomic scope" value="Bacteria"/>
</dbReference>
<dbReference type="HOGENOM" id="CLU_000445_89_6_9"/>
<dbReference type="BRENDA" id="2.7.13.3">
    <property type="organism ID" value="1960"/>
</dbReference>
<dbReference type="Proteomes" id="UP000000586">
    <property type="component" value="Chromosome"/>
</dbReference>
<dbReference type="GO" id="GO:0005886">
    <property type="term" value="C:plasma membrane"/>
    <property type="evidence" value="ECO:0007669"/>
    <property type="project" value="UniProtKB-SubCell"/>
</dbReference>
<dbReference type="GO" id="GO:0005524">
    <property type="term" value="F:ATP binding"/>
    <property type="evidence" value="ECO:0007669"/>
    <property type="project" value="UniProtKB-KW"/>
</dbReference>
<dbReference type="GO" id="GO:0000155">
    <property type="term" value="F:phosphorelay sensor kinase activity"/>
    <property type="evidence" value="ECO:0007669"/>
    <property type="project" value="InterPro"/>
</dbReference>
<dbReference type="GO" id="GO:0030420">
    <property type="term" value="P:establishment of competence for transformation"/>
    <property type="evidence" value="ECO:0007669"/>
    <property type="project" value="UniProtKB-KW"/>
</dbReference>
<dbReference type="CDD" id="cd00075">
    <property type="entry name" value="HATPase"/>
    <property type="match status" value="1"/>
</dbReference>
<dbReference type="CDD" id="cd00082">
    <property type="entry name" value="HisKA"/>
    <property type="match status" value="1"/>
</dbReference>
<dbReference type="FunFam" id="3.30.565.10:FF:000006">
    <property type="entry name" value="Sensor histidine kinase WalK"/>
    <property type="match status" value="1"/>
</dbReference>
<dbReference type="Gene3D" id="1.10.287.130">
    <property type="match status" value="1"/>
</dbReference>
<dbReference type="Gene3D" id="3.30.565.10">
    <property type="entry name" value="Histidine kinase-like ATPase, C-terminal domain"/>
    <property type="match status" value="1"/>
</dbReference>
<dbReference type="InterPro" id="IPR050351">
    <property type="entry name" value="2-comp_sensor_kinase"/>
</dbReference>
<dbReference type="InterPro" id="IPR036890">
    <property type="entry name" value="HATPase_C_sf"/>
</dbReference>
<dbReference type="InterPro" id="IPR005467">
    <property type="entry name" value="His_kinase_dom"/>
</dbReference>
<dbReference type="InterPro" id="IPR003661">
    <property type="entry name" value="HisK_dim/P_dom"/>
</dbReference>
<dbReference type="InterPro" id="IPR036097">
    <property type="entry name" value="HisK_dim/P_sf"/>
</dbReference>
<dbReference type="InterPro" id="IPR004358">
    <property type="entry name" value="Sig_transdc_His_kin-like_C"/>
</dbReference>
<dbReference type="PANTHER" id="PTHR45453">
    <property type="entry name" value="PHOSPHATE REGULON SENSOR PROTEIN PHOR"/>
    <property type="match status" value="1"/>
</dbReference>
<dbReference type="PANTHER" id="PTHR45453:SF1">
    <property type="entry name" value="PHOSPHATE REGULON SENSOR PROTEIN PHOR"/>
    <property type="match status" value="1"/>
</dbReference>
<dbReference type="Pfam" id="PF02518">
    <property type="entry name" value="HATPase_c"/>
    <property type="match status" value="1"/>
</dbReference>
<dbReference type="Pfam" id="PF00512">
    <property type="entry name" value="HisKA"/>
    <property type="match status" value="1"/>
</dbReference>
<dbReference type="PRINTS" id="PR00344">
    <property type="entry name" value="BCTRLSENSOR"/>
</dbReference>
<dbReference type="SMART" id="SM00387">
    <property type="entry name" value="HATPase_c"/>
    <property type="match status" value="1"/>
</dbReference>
<dbReference type="SMART" id="SM00388">
    <property type="entry name" value="HisKA"/>
    <property type="match status" value="1"/>
</dbReference>
<dbReference type="SUPFAM" id="SSF55874">
    <property type="entry name" value="ATPase domain of HSP90 chaperone/DNA topoisomerase II/histidine kinase"/>
    <property type="match status" value="1"/>
</dbReference>
<dbReference type="SUPFAM" id="SSF47384">
    <property type="entry name" value="Homodimeric domain of signal transducing histidine kinase"/>
    <property type="match status" value="1"/>
</dbReference>
<dbReference type="PROSITE" id="PS50109">
    <property type="entry name" value="HIS_KIN"/>
    <property type="match status" value="1"/>
</dbReference>
<name>CIAH_STRR6</name>
<sequence length="444" mass="50673">MFSKLKKTWYADDFSYFIRNFGVFTLIFSTMTLIILQVMHSSLYTSVDDKLHGLSENPQAVIQLAINRATEEIKDLENARADASKVEIKPNVSSNTEVILFDKDFTQLLSGNRFLGLDKIKLEKKELGHIYQIQVFNSYGQEEIYRVILMETNISSVSTNIKYAAVLINTSQLEQASQKHEQLIVVVMASFWILSLLASLYLARVSVRPLLESMQKQQSFVENASHELRTPLAVLQNRLETLFRKPEATIMDVSESIASSLEEVRNMRFLTTSLLNLARRDDGIKPELAEVPTSFFNTTFTNYEMIASENNRVFRFENRIHRTIVTDQLLLKQLMTILFDNAVKYTEEDGEIDFLISATDRNLYLLVSDNGIGISTEDKKKIFDRFYRVDKARTRQKGGFGLGLSLAKQIVDALKGTVTVKDNKPKGTIFEVKIAIQTPSKKKK</sequence>
<accession>P0A4I6</accession>
<accession>Q54955</accession>
<evidence type="ECO:0000255" key="1"/>
<evidence type="ECO:0000255" key="2">
    <source>
        <dbReference type="PROSITE-ProRule" id="PRU00107"/>
    </source>
</evidence>
<gene>
    <name type="primary">ciaH</name>
    <name type="ordered locus">spr0708</name>
</gene>
<organism>
    <name type="scientific">Streptococcus pneumoniae (strain ATCC BAA-255 / R6)</name>
    <dbReference type="NCBI Taxonomy" id="171101"/>
    <lineage>
        <taxon>Bacteria</taxon>
        <taxon>Bacillati</taxon>
        <taxon>Bacillota</taxon>
        <taxon>Bacilli</taxon>
        <taxon>Lactobacillales</taxon>
        <taxon>Streptococcaceae</taxon>
        <taxon>Streptococcus</taxon>
    </lineage>
</organism>
<keyword id="KW-0067">ATP-binding</keyword>
<keyword id="KW-1003">Cell membrane</keyword>
<keyword id="KW-0178">Competence</keyword>
<keyword id="KW-0418">Kinase</keyword>
<keyword id="KW-0472">Membrane</keyword>
<keyword id="KW-0547">Nucleotide-binding</keyword>
<keyword id="KW-0597">Phosphoprotein</keyword>
<keyword id="KW-1185">Reference proteome</keyword>
<keyword id="KW-0808">Transferase</keyword>
<keyword id="KW-0812">Transmembrane</keyword>
<keyword id="KW-1133">Transmembrane helix</keyword>
<keyword id="KW-0902">Two-component regulatory system</keyword>
<protein>
    <recommendedName>
        <fullName>Sensor protein CiaH</fullName>
        <ecNumber>2.7.13.3</ecNumber>
    </recommendedName>
</protein>